<proteinExistence type="inferred from homology"/>
<dbReference type="EC" id="6.3.5.2"/>
<dbReference type="EMBL" id="CP002239">
    <property type="protein sequence ID" value="ADQ30075.1"/>
    <property type="molecule type" value="Genomic_DNA"/>
</dbReference>
<dbReference type="EMBL" id="U04240">
    <property type="protein sequence ID" value="AAC45539.1"/>
    <property type="molecule type" value="Genomic_DNA"/>
</dbReference>
<dbReference type="RefSeq" id="WP_010256184.1">
    <property type="nucleotide sequence ID" value="NC_017401.1"/>
</dbReference>
<dbReference type="SMR" id="E4QHI6"/>
<dbReference type="MEROPS" id="C26.957"/>
<dbReference type="KEGG" id="bbn:BbuN40_B18"/>
<dbReference type="PATRIC" id="fig|521007.3.peg.1199"/>
<dbReference type="HOGENOM" id="CLU_014340_0_5_12"/>
<dbReference type="UniPathway" id="UPA00189">
    <property type="reaction ID" value="UER00296"/>
</dbReference>
<dbReference type="GO" id="GO:0005829">
    <property type="term" value="C:cytosol"/>
    <property type="evidence" value="ECO:0007669"/>
    <property type="project" value="TreeGrafter"/>
</dbReference>
<dbReference type="GO" id="GO:0005524">
    <property type="term" value="F:ATP binding"/>
    <property type="evidence" value="ECO:0007669"/>
    <property type="project" value="UniProtKB-UniRule"/>
</dbReference>
<dbReference type="GO" id="GO:0003921">
    <property type="term" value="F:GMP synthase activity"/>
    <property type="evidence" value="ECO:0007669"/>
    <property type="project" value="InterPro"/>
</dbReference>
<dbReference type="CDD" id="cd01742">
    <property type="entry name" value="GATase1_GMP_Synthase"/>
    <property type="match status" value="1"/>
</dbReference>
<dbReference type="CDD" id="cd01997">
    <property type="entry name" value="GMP_synthase_C"/>
    <property type="match status" value="1"/>
</dbReference>
<dbReference type="FunFam" id="3.30.300.10:FF:000002">
    <property type="entry name" value="GMP synthase [glutamine-hydrolyzing]"/>
    <property type="match status" value="1"/>
</dbReference>
<dbReference type="FunFam" id="3.40.50.880:FF:000001">
    <property type="entry name" value="GMP synthase [glutamine-hydrolyzing]"/>
    <property type="match status" value="1"/>
</dbReference>
<dbReference type="Gene3D" id="3.30.300.10">
    <property type="match status" value="1"/>
</dbReference>
<dbReference type="Gene3D" id="3.40.50.880">
    <property type="match status" value="1"/>
</dbReference>
<dbReference type="Gene3D" id="3.40.50.620">
    <property type="entry name" value="HUPs"/>
    <property type="match status" value="1"/>
</dbReference>
<dbReference type="HAMAP" id="MF_00344">
    <property type="entry name" value="GMP_synthase"/>
    <property type="match status" value="1"/>
</dbReference>
<dbReference type="InterPro" id="IPR029062">
    <property type="entry name" value="Class_I_gatase-like"/>
</dbReference>
<dbReference type="InterPro" id="IPR017926">
    <property type="entry name" value="GATASE"/>
</dbReference>
<dbReference type="InterPro" id="IPR001674">
    <property type="entry name" value="GMP_synth_C"/>
</dbReference>
<dbReference type="InterPro" id="IPR004739">
    <property type="entry name" value="GMP_synth_GATase"/>
</dbReference>
<dbReference type="InterPro" id="IPR022955">
    <property type="entry name" value="GMP_synthase"/>
</dbReference>
<dbReference type="InterPro" id="IPR025777">
    <property type="entry name" value="GMPS_ATP_PPase_dom"/>
</dbReference>
<dbReference type="InterPro" id="IPR022310">
    <property type="entry name" value="NAD/GMP_synthase"/>
</dbReference>
<dbReference type="InterPro" id="IPR014729">
    <property type="entry name" value="Rossmann-like_a/b/a_fold"/>
</dbReference>
<dbReference type="NCBIfam" id="TIGR00884">
    <property type="entry name" value="guaA_Cterm"/>
    <property type="match status" value="1"/>
</dbReference>
<dbReference type="NCBIfam" id="TIGR00888">
    <property type="entry name" value="guaA_Nterm"/>
    <property type="match status" value="1"/>
</dbReference>
<dbReference type="NCBIfam" id="NF000848">
    <property type="entry name" value="PRK00074.1"/>
    <property type="match status" value="1"/>
</dbReference>
<dbReference type="PANTHER" id="PTHR11922:SF2">
    <property type="entry name" value="GMP SYNTHASE [GLUTAMINE-HYDROLYZING]"/>
    <property type="match status" value="1"/>
</dbReference>
<dbReference type="PANTHER" id="PTHR11922">
    <property type="entry name" value="GMP SYNTHASE-RELATED"/>
    <property type="match status" value="1"/>
</dbReference>
<dbReference type="Pfam" id="PF00117">
    <property type="entry name" value="GATase"/>
    <property type="match status" value="1"/>
</dbReference>
<dbReference type="Pfam" id="PF00958">
    <property type="entry name" value="GMP_synt_C"/>
    <property type="match status" value="1"/>
</dbReference>
<dbReference type="Pfam" id="PF02540">
    <property type="entry name" value="NAD_synthase"/>
    <property type="match status" value="1"/>
</dbReference>
<dbReference type="PRINTS" id="PR00096">
    <property type="entry name" value="GATASE"/>
</dbReference>
<dbReference type="SUPFAM" id="SSF52402">
    <property type="entry name" value="Adenine nucleotide alpha hydrolases-like"/>
    <property type="match status" value="1"/>
</dbReference>
<dbReference type="SUPFAM" id="SSF52317">
    <property type="entry name" value="Class I glutamine amidotransferase-like"/>
    <property type="match status" value="1"/>
</dbReference>
<dbReference type="SUPFAM" id="SSF54810">
    <property type="entry name" value="GMP synthetase C-terminal dimerisation domain"/>
    <property type="match status" value="1"/>
</dbReference>
<dbReference type="PROSITE" id="PS51273">
    <property type="entry name" value="GATASE_TYPE_1"/>
    <property type="match status" value="1"/>
</dbReference>
<dbReference type="PROSITE" id="PS51553">
    <property type="entry name" value="GMPS_ATP_PPASE"/>
    <property type="match status" value="1"/>
</dbReference>
<protein>
    <recommendedName>
        <fullName>GMP synthase [glutamine-hydrolyzing]</fullName>
        <ecNumber>6.3.5.2</ecNumber>
    </recommendedName>
    <alternativeName>
        <fullName>GMP synthetase</fullName>
    </alternativeName>
    <alternativeName>
        <fullName>Glutamine amidotransferase</fullName>
    </alternativeName>
</protein>
<gene>
    <name type="primary">guaA</name>
    <name type="ordered locus">BbuN40_B18</name>
</gene>
<reference key="1">
    <citation type="journal article" date="2011" name="J. Bacteriol.">
        <title>Whole-genome sequences of thirteen isolates of Borrelia burgdorferi.</title>
        <authorList>
            <person name="Schutzer S.E."/>
            <person name="Fraser-Liggett C.M."/>
            <person name="Casjens S.R."/>
            <person name="Qiu W.G."/>
            <person name="Dunn J.J."/>
            <person name="Mongodin E.F."/>
            <person name="Luft B.J."/>
        </authorList>
    </citation>
    <scope>NUCLEOTIDE SEQUENCE [LARGE SCALE GENOMIC DNA]</scope>
    <source>
        <strain>N40</strain>
        <plasmid>N40_cp26</plasmid>
    </source>
</reference>
<reference key="2">
    <citation type="journal article" date="1997" name="Mol. Microbiol.">
        <title>The Borrelia burgdorferi circular plasmid cp26: conservation of plasmid structure and targeted inactivation of the ospC gene.</title>
        <authorList>
            <person name="Tilly K."/>
            <person name="Casjens S."/>
            <person name="Stevenson B."/>
            <person name="Bono J.L."/>
            <person name="Samuels D.S."/>
            <person name="Hogan D."/>
            <person name="Rosa P."/>
        </authorList>
    </citation>
    <scope>NUCLEOTIDE SEQUENCE [GENOMIC DNA] OF 1-13</scope>
    <source>
        <strain>N40</strain>
        <plasmid>cp26 (circular 26 kb)</plasmid>
    </source>
</reference>
<keyword id="KW-0067">ATP-binding</keyword>
<keyword id="KW-0315">Glutamine amidotransferase</keyword>
<keyword id="KW-0332">GMP biosynthesis</keyword>
<keyword id="KW-0436">Ligase</keyword>
<keyword id="KW-0547">Nucleotide-binding</keyword>
<keyword id="KW-0614">Plasmid</keyword>
<keyword id="KW-0658">Purine biosynthesis</keyword>
<comment type="function">
    <text evidence="1">Catalyzes the synthesis of GMP from XMP.</text>
</comment>
<comment type="catalytic activity">
    <reaction>
        <text>XMP + L-glutamine + ATP + H2O = GMP + L-glutamate + AMP + diphosphate + 2 H(+)</text>
        <dbReference type="Rhea" id="RHEA:11680"/>
        <dbReference type="ChEBI" id="CHEBI:15377"/>
        <dbReference type="ChEBI" id="CHEBI:15378"/>
        <dbReference type="ChEBI" id="CHEBI:29985"/>
        <dbReference type="ChEBI" id="CHEBI:30616"/>
        <dbReference type="ChEBI" id="CHEBI:33019"/>
        <dbReference type="ChEBI" id="CHEBI:57464"/>
        <dbReference type="ChEBI" id="CHEBI:58115"/>
        <dbReference type="ChEBI" id="CHEBI:58359"/>
        <dbReference type="ChEBI" id="CHEBI:456215"/>
        <dbReference type="EC" id="6.3.5.2"/>
    </reaction>
</comment>
<comment type="pathway">
    <text>Purine metabolism; GMP biosynthesis; GMP from XMP (L-Gln route): step 1/1.</text>
</comment>
<comment type="subunit">
    <text evidence="1">Homodimer.</text>
</comment>
<organism>
    <name type="scientific">Borreliella burgdorferi (strain N40)</name>
    <name type="common">Borrelia burgdorferi</name>
    <dbReference type="NCBI Taxonomy" id="521007"/>
    <lineage>
        <taxon>Bacteria</taxon>
        <taxon>Pseudomonadati</taxon>
        <taxon>Spirochaetota</taxon>
        <taxon>Spirochaetia</taxon>
        <taxon>Spirochaetales</taxon>
        <taxon>Borreliaceae</taxon>
        <taxon>Borreliella</taxon>
    </lineage>
</organism>
<name>GUAA_BORBN</name>
<evidence type="ECO:0000250" key="1"/>
<geneLocation type="plasmid">
    <name>cp26</name>
    <name>circular 26 kb</name>
</geneLocation>
<geneLocation type="plasmid">
    <name>N40_cp26</name>
</geneLocation>
<feature type="chain" id="PRO_0000406311" description="GMP synthase [glutamine-hydrolyzing]">
    <location>
        <begin position="1"/>
        <end position="511"/>
    </location>
</feature>
<feature type="domain" description="Glutamine amidotransferase type-1">
    <location>
        <begin position="5"/>
        <end position="195"/>
    </location>
</feature>
<feature type="domain" description="GMPS ATP-PPase">
    <location>
        <begin position="196"/>
        <end position="386"/>
    </location>
</feature>
<feature type="active site" description="Nucleophile" evidence="1">
    <location>
        <position position="82"/>
    </location>
</feature>
<feature type="active site" evidence="1">
    <location>
        <position position="169"/>
    </location>
</feature>
<feature type="active site" evidence="1">
    <location>
        <position position="171"/>
    </location>
</feature>
<feature type="binding site" evidence="1">
    <location>
        <begin position="223"/>
        <end position="229"/>
    </location>
    <ligand>
        <name>ATP</name>
        <dbReference type="ChEBI" id="CHEBI:30616"/>
    </ligand>
</feature>
<accession>E4QHI6</accession>
<accession>O30439</accession>
<accession>P49056</accession>
<sequence length="511" mass="58061">MNAQAILVLDFGSQYSQLIARRIREIGVYTKVIPYYTPLKEIKNMNISGIILSGSPASVYSKEAPTLDMEIFNLKIPVLGICYGMQIIVKLFGGLVSKDSKQEYGRSEIFLKDEKSLLFSELPNKFQIIMSHGDSIEKIPDNFKQLAFTKNCIASISNETQKIYGLQFHPEVTHSEFGDQILKNFVFKICQAQINWSLEGNLETIVKKIKLKVGSKKVILGLSGGTDSLVCALLIKKAINENLICVFVNTGLLRKNENKKILELKHQYDLNIKYIDASTKFLNRLKNISDPEEKRKIIGKEFVDVFEKITLEDQNIEYLAQGTIYSDVIESKSKDSSSSKIKSHHNVGGLPDKMSLKLLEPLNEFFKDEIIQIGINLGIKKESLYRHPFPGPGLAIRIIGEVTQEKINILQEADNILTEELFINDLYYQIRQAFVVLLPVKSVGVMGDQRTYEYTAVIRCVNTQDFMTAEWTELPYSFLKKVSSRIINEVRGINRVCYDISSKPPSTIEWE</sequence>